<protein>
    <recommendedName>
        <fullName>Glycine--tRNA ligase alpha subunit</fullName>
        <ecNumber>6.1.1.14</ecNumber>
    </recommendedName>
    <alternativeName>
        <fullName>Glycyl-tRNA synthetase alpha subunit</fullName>
        <shortName>GlyRS</shortName>
    </alternativeName>
</protein>
<dbReference type="EC" id="6.1.1.14"/>
<dbReference type="EMBL" id="Y10435">
    <property type="protein sequence ID" value="CAA71456.1"/>
    <property type="molecule type" value="Genomic_DNA"/>
</dbReference>
<dbReference type="EMBL" id="AE016828">
    <property type="protein sequence ID" value="AAO91404.1"/>
    <property type="molecule type" value="Genomic_DNA"/>
</dbReference>
<dbReference type="RefSeq" id="NP_820890.1">
    <property type="nucleotide sequence ID" value="NC_002971.4"/>
</dbReference>
<dbReference type="RefSeq" id="WP_005769976.1">
    <property type="nucleotide sequence ID" value="NZ_CCYB01000002.1"/>
</dbReference>
<dbReference type="SMR" id="P94616"/>
<dbReference type="STRING" id="227377.CBU_1913"/>
<dbReference type="EnsemblBacteria" id="AAO91404">
    <property type="protein sequence ID" value="AAO91404"/>
    <property type="gene ID" value="CBU_1913"/>
</dbReference>
<dbReference type="GeneID" id="1209826"/>
<dbReference type="KEGG" id="cbu:CBU_1913"/>
<dbReference type="PATRIC" id="fig|227377.7.peg.1897"/>
<dbReference type="eggNOG" id="COG0752">
    <property type="taxonomic scope" value="Bacteria"/>
</dbReference>
<dbReference type="HOGENOM" id="CLU_057066_1_0_6"/>
<dbReference type="OrthoDB" id="9802183at2"/>
<dbReference type="Proteomes" id="UP000002671">
    <property type="component" value="Chromosome"/>
</dbReference>
<dbReference type="GO" id="GO:0005737">
    <property type="term" value="C:cytoplasm"/>
    <property type="evidence" value="ECO:0007669"/>
    <property type="project" value="UniProtKB-SubCell"/>
</dbReference>
<dbReference type="GO" id="GO:0005524">
    <property type="term" value="F:ATP binding"/>
    <property type="evidence" value="ECO:0007669"/>
    <property type="project" value="UniProtKB-UniRule"/>
</dbReference>
<dbReference type="GO" id="GO:0004820">
    <property type="term" value="F:glycine-tRNA ligase activity"/>
    <property type="evidence" value="ECO:0007669"/>
    <property type="project" value="UniProtKB-UniRule"/>
</dbReference>
<dbReference type="GO" id="GO:0006426">
    <property type="term" value="P:glycyl-tRNA aminoacylation"/>
    <property type="evidence" value="ECO:0007669"/>
    <property type="project" value="UniProtKB-UniRule"/>
</dbReference>
<dbReference type="CDD" id="cd00733">
    <property type="entry name" value="GlyRS_alpha_core"/>
    <property type="match status" value="1"/>
</dbReference>
<dbReference type="FunFam" id="3.30.930.10:FF:000006">
    <property type="entry name" value="Glycine--tRNA ligase alpha subunit"/>
    <property type="match status" value="1"/>
</dbReference>
<dbReference type="Gene3D" id="3.30.930.10">
    <property type="entry name" value="Bira Bifunctional Protein, Domain 2"/>
    <property type="match status" value="1"/>
</dbReference>
<dbReference type="Gene3D" id="1.20.58.180">
    <property type="entry name" value="Class II aaRS and biotin synthetases, domain 2"/>
    <property type="match status" value="1"/>
</dbReference>
<dbReference type="HAMAP" id="MF_00254">
    <property type="entry name" value="Gly_tRNA_synth_alpha"/>
    <property type="match status" value="1"/>
</dbReference>
<dbReference type="InterPro" id="IPR045864">
    <property type="entry name" value="aa-tRNA-synth_II/BPL/LPL"/>
</dbReference>
<dbReference type="InterPro" id="IPR006194">
    <property type="entry name" value="Gly-tRNA-synth_heterodimer"/>
</dbReference>
<dbReference type="InterPro" id="IPR002310">
    <property type="entry name" value="Gly-tRNA_ligase_asu"/>
</dbReference>
<dbReference type="NCBIfam" id="TIGR00388">
    <property type="entry name" value="glyQ"/>
    <property type="match status" value="1"/>
</dbReference>
<dbReference type="NCBIfam" id="NF006827">
    <property type="entry name" value="PRK09348.1"/>
    <property type="match status" value="1"/>
</dbReference>
<dbReference type="PANTHER" id="PTHR30075:SF2">
    <property type="entry name" value="GLYCINE--TRNA LIGASE, CHLOROPLASTIC_MITOCHONDRIAL 2"/>
    <property type="match status" value="1"/>
</dbReference>
<dbReference type="PANTHER" id="PTHR30075">
    <property type="entry name" value="GLYCYL-TRNA SYNTHETASE"/>
    <property type="match status" value="1"/>
</dbReference>
<dbReference type="Pfam" id="PF02091">
    <property type="entry name" value="tRNA-synt_2e"/>
    <property type="match status" value="1"/>
</dbReference>
<dbReference type="PRINTS" id="PR01044">
    <property type="entry name" value="TRNASYNTHGA"/>
</dbReference>
<dbReference type="SUPFAM" id="SSF55681">
    <property type="entry name" value="Class II aaRS and biotin synthetases"/>
    <property type="match status" value="1"/>
</dbReference>
<dbReference type="PROSITE" id="PS50861">
    <property type="entry name" value="AA_TRNA_LIGASE_II_GLYAB"/>
    <property type="match status" value="1"/>
</dbReference>
<reference key="1">
    <citation type="submission" date="1997-01" db="EMBL/GenBank/DDBJ databases">
        <authorList>
            <person name="Willems H."/>
            <person name="Jaeger C."/>
        </authorList>
    </citation>
    <scope>NUCLEOTIDE SEQUENCE [GENOMIC DNA]</scope>
    <source>
        <strain>RSA 493 / Nine Mile phase I</strain>
    </source>
</reference>
<reference key="2">
    <citation type="journal article" date="2003" name="Proc. Natl. Acad. Sci. U.S.A.">
        <title>Complete genome sequence of the Q-fever pathogen, Coxiella burnetii.</title>
        <authorList>
            <person name="Seshadri R."/>
            <person name="Paulsen I.T."/>
            <person name="Eisen J.A."/>
            <person name="Read T.D."/>
            <person name="Nelson K.E."/>
            <person name="Nelson W.C."/>
            <person name="Ward N.L."/>
            <person name="Tettelin H."/>
            <person name="Davidsen T.M."/>
            <person name="Beanan M.J."/>
            <person name="DeBoy R.T."/>
            <person name="Daugherty S.C."/>
            <person name="Brinkac L.M."/>
            <person name="Madupu R."/>
            <person name="Dodson R.J."/>
            <person name="Khouri H.M."/>
            <person name="Lee K.H."/>
            <person name="Carty H.A."/>
            <person name="Scanlan D."/>
            <person name="Heinzen R.A."/>
            <person name="Thompson H.A."/>
            <person name="Samuel J.E."/>
            <person name="Fraser C.M."/>
            <person name="Heidelberg J.F."/>
        </authorList>
    </citation>
    <scope>NUCLEOTIDE SEQUENCE [LARGE SCALE GENOMIC DNA]</scope>
    <source>
        <strain>RSA 493 / Nine Mile phase I</strain>
    </source>
</reference>
<gene>
    <name type="primary">glyQ</name>
    <name type="ordered locus">CBU_1913</name>
</gene>
<accession>P94616</accession>
<proteinExistence type="inferred from homology"/>
<organism>
    <name type="scientific">Coxiella burnetii (strain RSA 493 / Nine Mile phase I)</name>
    <dbReference type="NCBI Taxonomy" id="227377"/>
    <lineage>
        <taxon>Bacteria</taxon>
        <taxon>Pseudomonadati</taxon>
        <taxon>Pseudomonadota</taxon>
        <taxon>Gammaproteobacteria</taxon>
        <taxon>Legionellales</taxon>
        <taxon>Coxiellaceae</taxon>
        <taxon>Coxiella</taxon>
    </lineage>
</organism>
<keyword id="KW-0030">Aminoacyl-tRNA synthetase</keyword>
<keyword id="KW-0067">ATP-binding</keyword>
<keyword id="KW-0963">Cytoplasm</keyword>
<keyword id="KW-0436">Ligase</keyword>
<keyword id="KW-0547">Nucleotide-binding</keyword>
<keyword id="KW-0648">Protein biosynthesis</keyword>
<keyword id="KW-1185">Reference proteome</keyword>
<feature type="chain" id="PRO_0000072835" description="Glycine--tRNA ligase alpha subunit">
    <location>
        <begin position="1"/>
        <end position="319"/>
    </location>
</feature>
<evidence type="ECO:0000250" key="1"/>
<evidence type="ECO:0000305" key="2"/>
<comment type="catalytic activity">
    <reaction>
        <text>tRNA(Gly) + glycine + ATP = glycyl-tRNA(Gly) + AMP + diphosphate</text>
        <dbReference type="Rhea" id="RHEA:16013"/>
        <dbReference type="Rhea" id="RHEA-COMP:9664"/>
        <dbReference type="Rhea" id="RHEA-COMP:9683"/>
        <dbReference type="ChEBI" id="CHEBI:30616"/>
        <dbReference type="ChEBI" id="CHEBI:33019"/>
        <dbReference type="ChEBI" id="CHEBI:57305"/>
        <dbReference type="ChEBI" id="CHEBI:78442"/>
        <dbReference type="ChEBI" id="CHEBI:78522"/>
        <dbReference type="ChEBI" id="CHEBI:456215"/>
        <dbReference type="EC" id="6.1.1.14"/>
    </reaction>
</comment>
<comment type="subunit">
    <text evidence="1">Tetramer of two alpha and two beta subunits.</text>
</comment>
<comment type="subcellular location">
    <subcellularLocation>
        <location evidence="1">Cytoplasm</location>
    </subcellularLocation>
</comment>
<comment type="similarity">
    <text evidence="2">Belongs to the class-II aminoacyl-tRNA synthetase family.</text>
</comment>
<sequence>MKSSHPVNFQQMILALQEYWASQGCVLLQPFDMEVGAGTFHPATFLRAIGPEPWRAAYVQPSRRPTDGRYGDNPNRTQHYYQFQVVLKPSPDDIQDIYLGSLKALGIDPLTHDIRFVEDNWEAPTLGSWGVGWEVWQDGMEITQFTYFQQIGGLECKPVTGEITYGLERLAMFLQGIDNMFDLVWTEGPNGRVTYGQIFQQNEVEMSAYNFEYANVEALFNFFDFYEKEASQLIEVHLPLAAYEMVLKASHTFNLLDARQAISVTERQRFILRVRKLAQAVAEAYYSAREKLGFPMLEEISSSSSRVLPLAGNDRVKGC</sequence>
<name>SYGA_COXBU</name>